<proteinExistence type="inferred from homology"/>
<dbReference type="EC" id="3.1.-.-" evidence="1"/>
<dbReference type="EC" id="3.6.4.-" evidence="1"/>
<dbReference type="EMBL" id="AE009948">
    <property type="protein sequence ID" value="AAN00582.1"/>
    <property type="molecule type" value="Genomic_DNA"/>
</dbReference>
<dbReference type="RefSeq" id="NP_688709.1">
    <property type="nucleotide sequence ID" value="NC_004116.1"/>
</dbReference>
<dbReference type="RefSeq" id="WP_001060323.1">
    <property type="nucleotide sequence ID" value="NC_004116.1"/>
</dbReference>
<dbReference type="SMR" id="Q8DXX6"/>
<dbReference type="STRING" id="208435.SAG1719"/>
<dbReference type="DNASU" id="1014528"/>
<dbReference type="GeneID" id="66886559"/>
<dbReference type="KEGG" id="sag:SAG1719"/>
<dbReference type="PATRIC" id="fig|208435.3.peg.1727"/>
<dbReference type="HOGENOM" id="CLU_011252_2_1_9"/>
<dbReference type="OrthoDB" id="9808166at2"/>
<dbReference type="Proteomes" id="UP000000821">
    <property type="component" value="Chromosome"/>
</dbReference>
<dbReference type="GO" id="GO:0005524">
    <property type="term" value="F:ATP binding"/>
    <property type="evidence" value="ECO:0007669"/>
    <property type="project" value="UniProtKB-UniRule"/>
</dbReference>
<dbReference type="GO" id="GO:0016887">
    <property type="term" value="F:ATP hydrolysis activity"/>
    <property type="evidence" value="ECO:0007669"/>
    <property type="project" value="InterPro"/>
</dbReference>
<dbReference type="GO" id="GO:0140664">
    <property type="term" value="F:ATP-dependent DNA damage sensor activity"/>
    <property type="evidence" value="ECO:0007669"/>
    <property type="project" value="InterPro"/>
</dbReference>
<dbReference type="GO" id="GO:0004519">
    <property type="term" value="F:endonuclease activity"/>
    <property type="evidence" value="ECO:0007669"/>
    <property type="project" value="UniProtKB-UniRule"/>
</dbReference>
<dbReference type="GO" id="GO:0030983">
    <property type="term" value="F:mismatched DNA binding"/>
    <property type="evidence" value="ECO:0007669"/>
    <property type="project" value="InterPro"/>
</dbReference>
<dbReference type="GO" id="GO:0043023">
    <property type="term" value="F:ribosomal large subunit binding"/>
    <property type="evidence" value="ECO:0007669"/>
    <property type="project" value="UniProtKB-UniRule"/>
</dbReference>
<dbReference type="GO" id="GO:0019843">
    <property type="term" value="F:rRNA binding"/>
    <property type="evidence" value="ECO:0007669"/>
    <property type="project" value="UniProtKB-UniRule"/>
</dbReference>
<dbReference type="GO" id="GO:0006298">
    <property type="term" value="P:mismatch repair"/>
    <property type="evidence" value="ECO:0007669"/>
    <property type="project" value="InterPro"/>
</dbReference>
<dbReference type="GO" id="GO:0045910">
    <property type="term" value="P:negative regulation of DNA recombination"/>
    <property type="evidence" value="ECO:0007669"/>
    <property type="project" value="InterPro"/>
</dbReference>
<dbReference type="GO" id="GO:0072344">
    <property type="term" value="P:rescue of stalled ribosome"/>
    <property type="evidence" value="ECO:0007669"/>
    <property type="project" value="UniProtKB-UniRule"/>
</dbReference>
<dbReference type="CDD" id="cd03280">
    <property type="entry name" value="ABC_MutS2"/>
    <property type="match status" value="1"/>
</dbReference>
<dbReference type="FunFam" id="3.40.50.300:FF:000830">
    <property type="entry name" value="Endonuclease MutS2"/>
    <property type="match status" value="1"/>
</dbReference>
<dbReference type="Gene3D" id="1.10.1420.10">
    <property type="match status" value="2"/>
</dbReference>
<dbReference type="Gene3D" id="3.30.1370.110">
    <property type="match status" value="1"/>
</dbReference>
<dbReference type="Gene3D" id="3.40.50.300">
    <property type="entry name" value="P-loop containing nucleotide triphosphate hydrolases"/>
    <property type="match status" value="1"/>
</dbReference>
<dbReference type="HAMAP" id="MF_00092">
    <property type="entry name" value="MutS2"/>
    <property type="match status" value="1"/>
</dbReference>
<dbReference type="InterPro" id="IPR000432">
    <property type="entry name" value="DNA_mismatch_repair_MutS_C"/>
</dbReference>
<dbReference type="InterPro" id="IPR007696">
    <property type="entry name" value="DNA_mismatch_repair_MutS_core"/>
</dbReference>
<dbReference type="InterPro" id="IPR036187">
    <property type="entry name" value="DNA_mismatch_repair_MutS_sf"/>
</dbReference>
<dbReference type="InterPro" id="IPR046893">
    <property type="entry name" value="MSSS"/>
</dbReference>
<dbReference type="InterPro" id="IPR045076">
    <property type="entry name" value="MutS"/>
</dbReference>
<dbReference type="InterPro" id="IPR005747">
    <property type="entry name" value="MutS2"/>
</dbReference>
<dbReference type="InterPro" id="IPR027417">
    <property type="entry name" value="P-loop_NTPase"/>
</dbReference>
<dbReference type="InterPro" id="IPR002625">
    <property type="entry name" value="Smr_dom"/>
</dbReference>
<dbReference type="InterPro" id="IPR036063">
    <property type="entry name" value="Smr_dom_sf"/>
</dbReference>
<dbReference type="NCBIfam" id="TIGR01069">
    <property type="entry name" value="mutS2"/>
    <property type="match status" value="1"/>
</dbReference>
<dbReference type="PANTHER" id="PTHR48466:SF2">
    <property type="entry name" value="OS10G0509000 PROTEIN"/>
    <property type="match status" value="1"/>
</dbReference>
<dbReference type="PANTHER" id="PTHR48466">
    <property type="entry name" value="OS10G0509000 PROTEIN-RELATED"/>
    <property type="match status" value="1"/>
</dbReference>
<dbReference type="Pfam" id="PF20297">
    <property type="entry name" value="MSSS"/>
    <property type="match status" value="1"/>
</dbReference>
<dbReference type="Pfam" id="PF00488">
    <property type="entry name" value="MutS_V"/>
    <property type="match status" value="1"/>
</dbReference>
<dbReference type="Pfam" id="PF01713">
    <property type="entry name" value="Smr"/>
    <property type="match status" value="1"/>
</dbReference>
<dbReference type="PIRSF" id="PIRSF005814">
    <property type="entry name" value="MutS_YshD"/>
    <property type="match status" value="1"/>
</dbReference>
<dbReference type="SMART" id="SM00534">
    <property type="entry name" value="MUTSac"/>
    <property type="match status" value="1"/>
</dbReference>
<dbReference type="SMART" id="SM00533">
    <property type="entry name" value="MUTSd"/>
    <property type="match status" value="1"/>
</dbReference>
<dbReference type="SMART" id="SM00463">
    <property type="entry name" value="SMR"/>
    <property type="match status" value="1"/>
</dbReference>
<dbReference type="SUPFAM" id="SSF48334">
    <property type="entry name" value="DNA repair protein MutS, domain III"/>
    <property type="match status" value="1"/>
</dbReference>
<dbReference type="SUPFAM" id="SSF52540">
    <property type="entry name" value="P-loop containing nucleoside triphosphate hydrolases"/>
    <property type="match status" value="1"/>
</dbReference>
<dbReference type="SUPFAM" id="SSF160443">
    <property type="entry name" value="SMR domain-like"/>
    <property type="match status" value="1"/>
</dbReference>
<dbReference type="PROSITE" id="PS00486">
    <property type="entry name" value="DNA_MISMATCH_REPAIR_2"/>
    <property type="match status" value="1"/>
</dbReference>
<dbReference type="PROSITE" id="PS50828">
    <property type="entry name" value="SMR"/>
    <property type="match status" value="1"/>
</dbReference>
<accession>Q8DXX6</accession>
<name>MUTS2_STRA5</name>
<comment type="function">
    <text evidence="1">Endonuclease that is involved in the suppression of homologous recombination and thus may have a key role in the control of bacterial genetic diversity.</text>
</comment>
<comment type="function">
    <text evidence="1">Acts as a ribosome collision sensor, splitting the ribosome into its 2 subunits. Detects stalled/collided 70S ribosomes which it binds and splits by an ATP-hydrolysis driven conformational change. Acts upstream of the ribosome quality control system (RQC), a ribosome-associated complex that mediates the extraction of incompletely synthesized nascent chains from stalled ribosomes and their subsequent degradation. Probably generates substrates for RQC.</text>
</comment>
<comment type="subunit">
    <text evidence="1">Homodimer. Binds to stalled ribosomes, contacting rRNA.</text>
</comment>
<comment type="similarity">
    <text evidence="1">Belongs to the DNA mismatch repair MutS family. MutS2 subfamily.</text>
</comment>
<keyword id="KW-0067">ATP-binding</keyword>
<keyword id="KW-0238">DNA-binding</keyword>
<keyword id="KW-0255">Endonuclease</keyword>
<keyword id="KW-0378">Hydrolase</keyword>
<keyword id="KW-0540">Nuclease</keyword>
<keyword id="KW-0547">Nucleotide-binding</keyword>
<keyword id="KW-1185">Reference proteome</keyword>
<keyword id="KW-0694">RNA-binding</keyword>
<keyword id="KW-0699">rRNA-binding</keyword>
<gene>
    <name evidence="1" type="primary">mutS2</name>
    <name evidence="1" type="synonym">rqcU</name>
    <name type="ordered locus">SAG1719</name>
</gene>
<reference key="1">
    <citation type="journal article" date="2002" name="Proc. Natl. Acad. Sci. U.S.A.">
        <title>Complete genome sequence and comparative genomic analysis of an emerging human pathogen, serotype V Streptococcus agalactiae.</title>
        <authorList>
            <person name="Tettelin H."/>
            <person name="Masignani V."/>
            <person name="Cieslewicz M.J."/>
            <person name="Eisen J.A."/>
            <person name="Peterson S.N."/>
            <person name="Wessels M.R."/>
            <person name="Paulsen I.T."/>
            <person name="Nelson K.E."/>
            <person name="Margarit I."/>
            <person name="Read T.D."/>
            <person name="Madoff L.C."/>
            <person name="Wolf A.M."/>
            <person name="Beanan M.J."/>
            <person name="Brinkac L.M."/>
            <person name="Daugherty S.C."/>
            <person name="DeBoy R.T."/>
            <person name="Durkin A.S."/>
            <person name="Kolonay J.F."/>
            <person name="Madupu R."/>
            <person name="Lewis M.R."/>
            <person name="Radune D."/>
            <person name="Fedorova N.B."/>
            <person name="Scanlan D."/>
            <person name="Khouri H.M."/>
            <person name="Mulligan S."/>
            <person name="Carty H.A."/>
            <person name="Cline R.T."/>
            <person name="Van Aken S.E."/>
            <person name="Gill J."/>
            <person name="Scarselli M."/>
            <person name="Mora M."/>
            <person name="Iacobini E.T."/>
            <person name="Brettoni C."/>
            <person name="Galli G."/>
            <person name="Mariani M."/>
            <person name="Vegni F."/>
            <person name="Maione D."/>
            <person name="Rinaudo D."/>
            <person name="Rappuoli R."/>
            <person name="Telford J.L."/>
            <person name="Kasper D.L."/>
            <person name="Grandi G."/>
            <person name="Fraser C.M."/>
        </authorList>
    </citation>
    <scope>NUCLEOTIDE SEQUENCE [LARGE SCALE GENOMIC DNA]</scope>
    <source>
        <strain>ATCC BAA-611 / 2603 V/R</strain>
    </source>
</reference>
<protein>
    <recommendedName>
        <fullName evidence="1">Endonuclease MutS2</fullName>
        <ecNumber evidence="1">3.1.-.-</ecNumber>
    </recommendedName>
    <alternativeName>
        <fullName evidence="1">Ribosome-associated protein quality control-upstream factor</fullName>
        <shortName evidence="1">RQC-upstream factor</shortName>
        <shortName evidence="1">RqcU</shortName>
        <ecNumber evidence="1">3.6.4.-</ecNumber>
    </alternativeName>
</protein>
<feature type="chain" id="PRO_1000093388" description="Endonuclease MutS2">
    <location>
        <begin position="1"/>
        <end position="779"/>
    </location>
</feature>
<feature type="domain" description="Smr" evidence="1">
    <location>
        <begin position="704"/>
        <end position="779"/>
    </location>
</feature>
<feature type="binding site" evidence="1">
    <location>
        <begin position="328"/>
        <end position="335"/>
    </location>
    <ligand>
        <name>ATP</name>
        <dbReference type="ChEBI" id="CHEBI:30616"/>
    </ligand>
</feature>
<organism>
    <name type="scientific">Streptococcus agalactiae serotype V (strain ATCC BAA-611 / 2603 V/R)</name>
    <dbReference type="NCBI Taxonomy" id="208435"/>
    <lineage>
        <taxon>Bacteria</taxon>
        <taxon>Bacillati</taxon>
        <taxon>Bacillota</taxon>
        <taxon>Bacilli</taxon>
        <taxon>Lactobacillales</taxon>
        <taxon>Streptococcaceae</taxon>
        <taxon>Streptococcus</taxon>
    </lineage>
</organism>
<evidence type="ECO:0000255" key="1">
    <source>
        <dbReference type="HAMAP-Rule" id="MF_00092"/>
    </source>
</evidence>
<sequence>MNNKILEQLEFNKVKELILPYLKTEQSQEELSELEPMTEAPKIEKSFNEISDMEQIFVEHHSFGIVSLSSISESLKRLELSADLNIQELLAIKKVLQSSSDMIHFYSDLDNVSFQSLDRLFENLEQFPNLQGSFQAINDGGFLEHFASPELERIRRQLTNSERRVRQILQDMLKEKAELLSENLIASRSGRSVLPVKNTYRNRISGVVHDISSSGSTVYIEPRAVVTLNEEITQLRADERHEESRILHAFSDLLRPHVATIRNNAWILGHLDFVRAKYLFMSDNKATIPEISNDSTLALINVRHPLLSNPVANDLHFDQDLTAIVITGPNTGGKTIMLKTLGLAQLMGQSGLPVLADKGSKIAVFNNIFADIGDEQSIEQSLSTFSSHMTHIVSILNEADHNSLVLFDELGAGTDPQEGASLAMAILEHLRLSNIKTMATTHYPELKAYGIETNFVENASMEFDAETLSPTYRFMQGVPGRSNAFEIASRLGLAPFIVKQAKQMTDSDSDVNRIIEQLEAQTLETRRRLDHIKEVEQENLKFNRAVKKLYNEFSHERDKELEKIYQEAQEIVDMALNESDTILKKLNDKSQLKPHEIIDAKAQIKKLAPQVDLSKNKVLNKAKKIKAARAPRIGDDIIVTSYGQRGTLTSQLKDGRWEAQVGIIKMTLTQDEFTLVRVQEEQKVKSKQINVVKKADSSGPRARLDLRGKRYEEAMQELDNFIDQALLNNMGQVDIIHGIGTGVIREGVTKYLRRNKHVKHFAYAPQNAGGSGATIVTLG</sequence>